<keyword id="KW-0025">Alternative splicing</keyword>
<keyword id="KW-1003">Cell membrane</keyword>
<keyword id="KW-0966">Cell projection</keyword>
<keyword id="KW-0963">Cytoplasm</keyword>
<keyword id="KW-0217">Developmental protein</keyword>
<keyword id="KW-0221">Differentiation</keyword>
<keyword id="KW-1015">Disulfide bond</keyword>
<keyword id="KW-0245">EGF-like domain</keyword>
<keyword id="KW-0325">Glycoprotein</keyword>
<keyword id="KW-0472">Membrane</keyword>
<keyword id="KW-0539">Nucleus</keyword>
<keyword id="KW-0597">Phosphoprotein</keyword>
<keyword id="KW-1185">Reference proteome</keyword>
<keyword id="KW-0677">Repeat</keyword>
<keyword id="KW-0812">Transmembrane</keyword>
<keyword id="KW-1133">Transmembrane helix</keyword>
<proteinExistence type="evidence at protein level"/>
<reference key="1">
    <citation type="journal article" date="1998" name="EMBO J.">
        <title>Identification of novel stress-induced genes downstream of chop.</title>
        <authorList>
            <person name="Wang X.-Z."/>
            <person name="Kuroda M."/>
            <person name="Sok J."/>
            <person name="Batchvarova N."/>
            <person name="Kimmel R."/>
            <person name="Chung P."/>
            <person name="Zinszner H."/>
            <person name="Ron D."/>
        </authorList>
    </citation>
    <scope>NUCLEOTIDE SEQUENCE [MRNA] (ISOFORM 2)</scope>
    <source>
        <strain>NIH Swiss</strain>
    </source>
</reference>
<reference key="2">
    <citation type="journal article" date="1999" name="J. Cell Biol.">
        <title>Mouse ten-m/Odz is a new family of dimeric type II transmembrane proteins expressed in many tissues.</title>
        <authorList>
            <person name="Oohashi T."/>
            <person name="Zhou X.-H."/>
            <person name="Feng K."/>
            <person name="Richter B."/>
            <person name="Moergelin M."/>
            <person name="Perez M.T."/>
            <person name="Su W.D."/>
            <person name="Chiquet-Ehrismann R."/>
            <person name="Rauch U."/>
            <person name="Faessler R."/>
        </authorList>
    </citation>
    <scope>NUCLEOTIDE SEQUENCE [MRNA] (ISOFORM 1)</scope>
    <source>
        <strain>BALB/cJ</strain>
        <tissue>Brain</tissue>
    </source>
</reference>
<reference key="3">
    <citation type="journal article" date="2005" name="Science">
        <title>The transcriptional landscape of the mammalian genome.</title>
        <authorList>
            <person name="Carninci P."/>
            <person name="Kasukawa T."/>
            <person name="Katayama S."/>
            <person name="Gough J."/>
            <person name="Frith M.C."/>
            <person name="Maeda N."/>
            <person name="Oyama R."/>
            <person name="Ravasi T."/>
            <person name="Lenhard B."/>
            <person name="Wells C."/>
            <person name="Kodzius R."/>
            <person name="Shimokawa K."/>
            <person name="Bajic V.B."/>
            <person name="Brenner S.E."/>
            <person name="Batalov S."/>
            <person name="Forrest A.R."/>
            <person name="Zavolan M."/>
            <person name="Davis M.J."/>
            <person name="Wilming L.G."/>
            <person name="Aidinis V."/>
            <person name="Allen J.E."/>
            <person name="Ambesi-Impiombato A."/>
            <person name="Apweiler R."/>
            <person name="Aturaliya R.N."/>
            <person name="Bailey T.L."/>
            <person name="Bansal M."/>
            <person name="Baxter L."/>
            <person name="Beisel K.W."/>
            <person name="Bersano T."/>
            <person name="Bono H."/>
            <person name="Chalk A.M."/>
            <person name="Chiu K.P."/>
            <person name="Choudhary V."/>
            <person name="Christoffels A."/>
            <person name="Clutterbuck D.R."/>
            <person name="Crowe M.L."/>
            <person name="Dalla E."/>
            <person name="Dalrymple B.P."/>
            <person name="de Bono B."/>
            <person name="Della Gatta G."/>
            <person name="di Bernardo D."/>
            <person name="Down T."/>
            <person name="Engstrom P."/>
            <person name="Fagiolini M."/>
            <person name="Faulkner G."/>
            <person name="Fletcher C.F."/>
            <person name="Fukushima T."/>
            <person name="Furuno M."/>
            <person name="Futaki S."/>
            <person name="Gariboldi M."/>
            <person name="Georgii-Hemming P."/>
            <person name="Gingeras T.R."/>
            <person name="Gojobori T."/>
            <person name="Green R.E."/>
            <person name="Gustincich S."/>
            <person name="Harbers M."/>
            <person name="Hayashi Y."/>
            <person name="Hensch T.K."/>
            <person name="Hirokawa N."/>
            <person name="Hill D."/>
            <person name="Huminiecki L."/>
            <person name="Iacono M."/>
            <person name="Ikeo K."/>
            <person name="Iwama A."/>
            <person name="Ishikawa T."/>
            <person name="Jakt M."/>
            <person name="Kanapin A."/>
            <person name="Katoh M."/>
            <person name="Kawasawa Y."/>
            <person name="Kelso J."/>
            <person name="Kitamura H."/>
            <person name="Kitano H."/>
            <person name="Kollias G."/>
            <person name="Krishnan S.P."/>
            <person name="Kruger A."/>
            <person name="Kummerfeld S.K."/>
            <person name="Kurochkin I.V."/>
            <person name="Lareau L.F."/>
            <person name="Lazarevic D."/>
            <person name="Lipovich L."/>
            <person name="Liu J."/>
            <person name="Liuni S."/>
            <person name="McWilliam S."/>
            <person name="Madan Babu M."/>
            <person name="Madera M."/>
            <person name="Marchionni L."/>
            <person name="Matsuda H."/>
            <person name="Matsuzawa S."/>
            <person name="Miki H."/>
            <person name="Mignone F."/>
            <person name="Miyake S."/>
            <person name="Morris K."/>
            <person name="Mottagui-Tabar S."/>
            <person name="Mulder N."/>
            <person name="Nakano N."/>
            <person name="Nakauchi H."/>
            <person name="Ng P."/>
            <person name="Nilsson R."/>
            <person name="Nishiguchi S."/>
            <person name="Nishikawa S."/>
            <person name="Nori F."/>
            <person name="Ohara O."/>
            <person name="Okazaki Y."/>
            <person name="Orlando V."/>
            <person name="Pang K.C."/>
            <person name="Pavan W.J."/>
            <person name="Pavesi G."/>
            <person name="Pesole G."/>
            <person name="Petrovsky N."/>
            <person name="Piazza S."/>
            <person name="Reed J."/>
            <person name="Reid J.F."/>
            <person name="Ring B.Z."/>
            <person name="Ringwald M."/>
            <person name="Rost B."/>
            <person name="Ruan Y."/>
            <person name="Salzberg S.L."/>
            <person name="Sandelin A."/>
            <person name="Schneider C."/>
            <person name="Schoenbach C."/>
            <person name="Sekiguchi K."/>
            <person name="Semple C.A."/>
            <person name="Seno S."/>
            <person name="Sessa L."/>
            <person name="Sheng Y."/>
            <person name="Shibata Y."/>
            <person name="Shimada H."/>
            <person name="Shimada K."/>
            <person name="Silva D."/>
            <person name="Sinclair B."/>
            <person name="Sperling S."/>
            <person name="Stupka E."/>
            <person name="Sugiura K."/>
            <person name="Sultana R."/>
            <person name="Takenaka Y."/>
            <person name="Taki K."/>
            <person name="Tammoja K."/>
            <person name="Tan S.L."/>
            <person name="Tang S."/>
            <person name="Taylor M.S."/>
            <person name="Tegner J."/>
            <person name="Teichmann S.A."/>
            <person name="Ueda H.R."/>
            <person name="van Nimwegen E."/>
            <person name="Verardo R."/>
            <person name="Wei C.L."/>
            <person name="Yagi K."/>
            <person name="Yamanishi H."/>
            <person name="Zabarovsky E."/>
            <person name="Zhu S."/>
            <person name="Zimmer A."/>
            <person name="Hide W."/>
            <person name="Bult C."/>
            <person name="Grimmond S.M."/>
            <person name="Teasdale R.D."/>
            <person name="Liu E.T."/>
            <person name="Brusic V."/>
            <person name="Quackenbush J."/>
            <person name="Wahlestedt C."/>
            <person name="Mattick J.S."/>
            <person name="Hume D.A."/>
            <person name="Kai C."/>
            <person name="Sasaki D."/>
            <person name="Tomaru Y."/>
            <person name="Fukuda S."/>
            <person name="Kanamori-Katayama M."/>
            <person name="Suzuki M."/>
            <person name="Aoki J."/>
            <person name="Arakawa T."/>
            <person name="Iida J."/>
            <person name="Imamura K."/>
            <person name="Itoh M."/>
            <person name="Kato T."/>
            <person name="Kawaji H."/>
            <person name="Kawagashira N."/>
            <person name="Kawashima T."/>
            <person name="Kojima M."/>
            <person name="Kondo S."/>
            <person name="Konno H."/>
            <person name="Nakano K."/>
            <person name="Ninomiya N."/>
            <person name="Nishio T."/>
            <person name="Okada M."/>
            <person name="Plessy C."/>
            <person name="Shibata K."/>
            <person name="Shiraki T."/>
            <person name="Suzuki S."/>
            <person name="Tagami M."/>
            <person name="Waki K."/>
            <person name="Watahiki A."/>
            <person name="Okamura-Oho Y."/>
            <person name="Suzuki H."/>
            <person name="Kawai J."/>
            <person name="Hayashizaki Y."/>
        </authorList>
    </citation>
    <scope>NUCLEOTIDE SEQUENCE [LARGE SCALE MRNA] (ISOFORMS 3 AND 4)</scope>
    <source>
        <strain>C57BL/6J</strain>
        <tissue>Muellerian duct</tissue>
    </source>
</reference>
<reference key="4">
    <citation type="journal article" date="2003" name="DNA Res.">
        <title>Prediction of the coding sequences of mouse homologues of KIAA gene: II. The complete nucleotide sequences of 400 mouse KIAA-homologous cDNAs identified by screening of terminal sequences of cDNA clones randomly sampled from size-fractionated libraries.</title>
        <authorList>
            <person name="Okazaki N."/>
            <person name="Kikuno R."/>
            <person name="Ohara R."/>
            <person name="Inamoto S."/>
            <person name="Aizawa H."/>
            <person name="Yuasa S."/>
            <person name="Nakajima D."/>
            <person name="Nagase T."/>
            <person name="Ohara O."/>
            <person name="Koga H."/>
        </authorList>
    </citation>
    <scope>NUCLEOTIDE SEQUENCE [LARGE SCALE MRNA] OF 1574-2771</scope>
    <source>
        <tissue>Brain</tissue>
    </source>
</reference>
<reference key="5">
    <citation type="journal article" date="2002" name="J. Biol. Chem.">
        <title>All four members of the Ten-m/Odz family of transmembrane proteins form dimers.</title>
        <authorList>
            <person name="Feng K."/>
            <person name="Zhou X.H."/>
            <person name="Oohashi T."/>
            <person name="Morgelin M."/>
            <person name="Lustig A."/>
            <person name="Hirakawa S."/>
            <person name="Ninomiya Y."/>
            <person name="Engel J."/>
            <person name="Rauch U."/>
            <person name="Fassler R."/>
        </authorList>
    </citation>
    <scope>HOMODIMERIZATION</scope>
    <scope>HETERODIMERIZATION</scope>
</reference>
<reference key="6">
    <citation type="journal article" date="2003" name="Gene Expr. Patterns">
        <title>The murine Ten-m/Odz genes show distinct but overlapping expression patterns during development and in adult brain.</title>
        <authorList>
            <person name="Zhou X.H."/>
            <person name="Brandau O."/>
            <person name="Feng K."/>
            <person name="Oohashi T."/>
            <person name="Ninomiya Y."/>
            <person name="Rauch U."/>
            <person name="Fassler R."/>
        </authorList>
    </citation>
    <scope>TISSUE SPECIFICITY</scope>
    <scope>DEVELOPMENTAL STAGE</scope>
</reference>
<reference key="7">
    <citation type="journal article" date="2005" name="Genetics">
        <title>Mutation of l7Rn3 shows that Odz4 is required for mouse gastrulation.</title>
        <authorList>
            <person name="Lossie A.C."/>
            <person name="Nakamura H."/>
            <person name="Thomas S.E."/>
            <person name="Justice M.J."/>
        </authorList>
    </citation>
    <scope>FUNCTION IN GASTRULATION</scope>
    <scope>ALTERNATIVE SPLICING</scope>
    <scope>TISSUE SPECIFICITY</scope>
    <scope>DEVELOPMENTAL STAGE</scope>
</reference>
<reference key="8">
    <citation type="journal article" date="2009" name="Nat. Biotechnol.">
        <title>Mass-spectrometric identification and relative quantification of N-linked cell surface glycoproteins.</title>
        <authorList>
            <person name="Wollscheid B."/>
            <person name="Bausch-Fluck D."/>
            <person name="Henderson C."/>
            <person name="O'Brien R."/>
            <person name="Bibel M."/>
            <person name="Schiess R."/>
            <person name="Aebersold R."/>
            <person name="Watts J.D."/>
        </authorList>
    </citation>
    <scope>GLYCOSYLATION [LARGE SCALE ANALYSIS] AT ASN-1707 AND ASN-2190</scope>
</reference>
<reference key="9">
    <citation type="journal article" date="2010" name="Cell">
        <title>A tissue-specific atlas of mouse protein phosphorylation and expression.</title>
        <authorList>
            <person name="Huttlin E.L."/>
            <person name="Jedrychowski M.P."/>
            <person name="Elias J.E."/>
            <person name="Goswami T."/>
            <person name="Rad R."/>
            <person name="Beausoleil S.A."/>
            <person name="Villen J."/>
            <person name="Haas W."/>
            <person name="Sowa M.E."/>
            <person name="Gygi S.P."/>
        </authorList>
    </citation>
    <scope>PHOSPHORYLATION [LARGE SCALE ANALYSIS] AT SER-124 AND THR-178</scope>
    <scope>IDENTIFICATION BY MASS SPECTROMETRY [LARGE SCALE ANALYSIS]</scope>
    <source>
        <tissue>Brain</tissue>
        <tissue>Brown adipose tissue</tissue>
    </source>
</reference>
<reference key="10">
    <citation type="journal article" date="2012" name="J. Neurosci.">
        <title>Teneurin-4 is a novel regulator of oligodendrocyte differentiation and myelination of small-diameter axons in the CNS.</title>
        <authorList>
            <person name="Suzuki N."/>
            <person name="Fukushi M."/>
            <person name="Kosaki K."/>
            <person name="Doyle A.D."/>
            <person name="de Vega S."/>
            <person name="Yoshizaki K."/>
            <person name="Akazawa C."/>
            <person name="Arikawa-Hirasawa E."/>
            <person name="Yamada Y."/>
        </authorList>
    </citation>
    <scope>FUNCTION IN OLIGODENDROCYTE DIFFERENTIATION</scope>
    <scope>SUBCELLULAR LOCATION</scope>
    <scope>DISRUPTION PHENOTYPE</scope>
    <scope>INDUCTION</scope>
    <scope>TISSUE SPECIFICITY</scope>
    <scope>DEVELOPMENTAL STAGE</scope>
</reference>
<protein>
    <recommendedName>
        <fullName>Teneurin-4</fullName>
        <shortName>Ten-4</shortName>
    </recommendedName>
    <alternativeName>
        <fullName>Downstream of CHOP4</fullName>
    </alternativeName>
    <alternativeName>
        <fullName>Protein Odd Oz/ten-m homolog 4</fullName>
    </alternativeName>
    <alternativeName>
        <fullName>Tenascin-M4</fullName>
        <shortName>Ten-m4</shortName>
    </alternativeName>
    <alternativeName>
        <fullName>Teneurin transmembrane protein 4</fullName>
    </alternativeName>
</protein>
<feature type="chain" id="PRO_0000259509" description="Teneurin-4">
    <location>
        <begin position="1"/>
        <end position="2771"/>
    </location>
</feature>
<feature type="topological domain" description="Cytoplasmic" evidence="2">
    <location>
        <begin position="1"/>
        <end position="345"/>
    </location>
</feature>
<feature type="transmembrane region" description="Helical" evidence="2">
    <location>
        <begin position="346"/>
        <end position="366"/>
    </location>
</feature>
<feature type="topological domain" description="Extracellular" evidence="2">
    <location>
        <begin position="367"/>
        <end position="2771"/>
    </location>
</feature>
<feature type="domain" description="Teneurin N-terminal" evidence="4">
    <location>
        <begin position="1"/>
        <end position="341"/>
    </location>
</feature>
<feature type="domain" description="EGF-like 1" evidence="3">
    <location>
        <begin position="564"/>
        <end position="595"/>
    </location>
</feature>
<feature type="domain" description="EGF-like 2" evidence="3">
    <location>
        <begin position="596"/>
        <end position="626"/>
    </location>
</feature>
<feature type="domain" description="EGF-like 3" evidence="3">
    <location>
        <begin position="628"/>
        <end position="660"/>
    </location>
</feature>
<feature type="domain" description="EGF-like 4" evidence="3">
    <location>
        <begin position="661"/>
        <end position="692"/>
    </location>
</feature>
<feature type="domain" description="EGF-like 5" evidence="3">
    <location>
        <begin position="694"/>
        <end position="727"/>
    </location>
</feature>
<feature type="domain" description="EGF-like 6" evidence="3">
    <location>
        <begin position="728"/>
        <end position="759"/>
    </location>
</feature>
<feature type="domain" description="EGF-like 7" evidence="3">
    <location>
        <begin position="760"/>
        <end position="789"/>
    </location>
</feature>
<feature type="domain" description="EGF-like 8" evidence="3">
    <location>
        <begin position="790"/>
        <end position="833"/>
    </location>
</feature>
<feature type="repeat" description="NHL 1">
    <location>
        <begin position="1218"/>
        <end position="1261"/>
    </location>
</feature>
<feature type="repeat" description="NHL 2">
    <location>
        <begin position="1266"/>
        <end position="1310"/>
    </location>
</feature>
<feature type="repeat" description="NHL 3">
    <location>
        <begin position="1336"/>
        <end position="1380"/>
    </location>
</feature>
<feature type="repeat" description="NHL 4">
    <location>
        <begin position="1395"/>
        <end position="1446"/>
    </location>
</feature>
<feature type="repeat" description="NHL 5">
    <location>
        <begin position="1525"/>
        <end position="1568"/>
    </location>
</feature>
<feature type="repeat" description="YD 1">
    <location>
        <begin position="1578"/>
        <end position="1597"/>
    </location>
</feature>
<feature type="repeat" description="YD 2">
    <location>
        <begin position="1614"/>
        <end position="1634"/>
    </location>
</feature>
<feature type="repeat" description="YD 3">
    <location>
        <begin position="1677"/>
        <end position="1696"/>
    </location>
</feature>
<feature type="repeat" description="YD 4">
    <location>
        <begin position="1697"/>
        <end position="1719"/>
    </location>
</feature>
<feature type="repeat" description="YD 5">
    <location>
        <begin position="1889"/>
        <end position="1908"/>
    </location>
</feature>
<feature type="repeat" description="YD 6">
    <location>
        <begin position="1930"/>
        <end position="1948"/>
    </location>
</feature>
<feature type="repeat" description="YD 7">
    <location>
        <begin position="1949"/>
        <end position="1969"/>
    </location>
</feature>
<feature type="repeat" description="YD 8">
    <location>
        <begin position="1976"/>
        <end position="1993"/>
    </location>
</feature>
<feature type="repeat" description="YD 9">
    <location>
        <begin position="1994"/>
        <end position="2015"/>
    </location>
</feature>
<feature type="repeat" description="YD 10">
    <location>
        <begin position="2016"/>
        <end position="2033"/>
    </location>
</feature>
<feature type="repeat" description="YD 11">
    <location>
        <begin position="2036"/>
        <end position="2056"/>
    </location>
</feature>
<feature type="repeat" description="YD 12">
    <location>
        <begin position="2059"/>
        <end position="2079"/>
    </location>
</feature>
<feature type="repeat" description="YD 13">
    <location>
        <begin position="2087"/>
        <end position="2106"/>
    </location>
</feature>
<feature type="repeat" description="YD 14">
    <location>
        <begin position="2112"/>
        <end position="2129"/>
    </location>
</feature>
<feature type="repeat" description="YD 15">
    <location>
        <begin position="2130"/>
        <end position="2156"/>
    </location>
</feature>
<feature type="repeat" description="YD 16">
    <location>
        <begin position="2158"/>
        <end position="2171"/>
    </location>
</feature>
<feature type="repeat" description="YD 17">
    <location>
        <begin position="2172"/>
        <end position="2195"/>
    </location>
</feature>
<feature type="repeat" description="YD 18">
    <location>
        <begin position="2198"/>
        <end position="2218"/>
    </location>
</feature>
<feature type="repeat" description="YD 19">
    <location>
        <begin position="2219"/>
        <end position="2239"/>
    </location>
</feature>
<feature type="repeat" description="YD 20">
    <location>
        <begin position="2241"/>
        <end position="2261"/>
    </location>
</feature>
<feature type="repeat" description="YD 21">
    <location>
        <begin position="2273"/>
        <end position="2293"/>
    </location>
</feature>
<feature type="repeat" description="YD 22">
    <location>
        <begin position="2295"/>
        <end position="2315"/>
    </location>
</feature>
<feature type="repeat" description="YD 23">
    <location>
        <begin position="2341"/>
        <end position="2382"/>
    </location>
</feature>
<feature type="region of interest" description="Disordered" evidence="5">
    <location>
        <begin position="1"/>
        <end position="45"/>
    </location>
</feature>
<feature type="region of interest" description="Disordered" evidence="5">
    <location>
        <begin position="132"/>
        <end position="233"/>
    </location>
</feature>
<feature type="region of interest" description="Disordered" evidence="5">
    <location>
        <begin position="403"/>
        <end position="428"/>
    </location>
</feature>
<feature type="region of interest" description="Disordered" evidence="5">
    <location>
        <begin position="509"/>
        <end position="528"/>
    </location>
</feature>
<feature type="compositionally biased region" description="Basic and acidic residues" evidence="5">
    <location>
        <begin position="1"/>
        <end position="22"/>
    </location>
</feature>
<feature type="compositionally biased region" description="Low complexity" evidence="5">
    <location>
        <begin position="134"/>
        <end position="155"/>
    </location>
</feature>
<feature type="compositionally biased region" description="Basic and acidic residues" evidence="5">
    <location>
        <begin position="156"/>
        <end position="166"/>
    </location>
</feature>
<feature type="compositionally biased region" description="Polar residues" evidence="5">
    <location>
        <begin position="191"/>
        <end position="211"/>
    </location>
</feature>
<feature type="compositionally biased region" description="Basic and acidic residues" evidence="5">
    <location>
        <begin position="410"/>
        <end position="419"/>
    </location>
</feature>
<feature type="modified residue" description="Phosphoserine" evidence="13">
    <location>
        <position position="124"/>
    </location>
</feature>
<feature type="modified residue" description="Phosphothreonine" evidence="13">
    <location>
        <position position="178"/>
    </location>
</feature>
<feature type="glycosylation site" description="N-linked (GlcNAc...) asparagine" evidence="2">
    <location>
        <position position="469"/>
    </location>
</feature>
<feature type="glycosylation site" description="N-linked (GlcNAc...) asparagine" evidence="2">
    <location>
        <position position="942"/>
    </location>
</feature>
<feature type="glycosylation site" description="N-linked (GlcNAc...) asparagine" evidence="2">
    <location>
        <position position="1261"/>
    </location>
</feature>
<feature type="glycosylation site" description="N-linked (GlcNAc...) asparagine" evidence="2">
    <location>
        <position position="1611"/>
    </location>
</feature>
<feature type="glycosylation site" description="N-linked (GlcNAc...) asparagine" evidence="8">
    <location>
        <position position="1707"/>
    </location>
</feature>
<feature type="glycosylation site" description="N-linked (GlcNAc...) asparagine" evidence="2">
    <location>
        <position position="1743"/>
    </location>
</feature>
<feature type="glycosylation site" description="N-linked (GlcNAc...) asparagine" evidence="2">
    <location>
        <position position="1801"/>
    </location>
</feature>
<feature type="glycosylation site" description="N-linked (GlcNAc...) asparagine" evidence="2">
    <location>
        <position position="1886"/>
    </location>
</feature>
<feature type="glycosylation site" description="N-linked (GlcNAc...) asparagine" evidence="2">
    <location>
        <position position="1987"/>
    </location>
</feature>
<feature type="glycosylation site" description="N-linked (GlcNAc...) asparagine" evidence="8">
    <location>
        <position position="2190"/>
    </location>
</feature>
<feature type="glycosylation site" description="N-linked (GlcNAc...) asparagine" evidence="2">
    <location>
        <position position="2330"/>
    </location>
</feature>
<feature type="glycosylation site" description="N-linked (GlcNAc...) asparagine" evidence="2">
    <location>
        <position position="2648"/>
    </location>
</feature>
<feature type="disulfide bond" evidence="3">
    <location>
        <begin position="568"/>
        <end position="578"/>
    </location>
</feature>
<feature type="disulfide bond" evidence="3">
    <location>
        <begin position="572"/>
        <end position="583"/>
    </location>
</feature>
<feature type="disulfide bond" evidence="3">
    <location>
        <begin position="585"/>
        <end position="594"/>
    </location>
</feature>
<feature type="disulfide bond" evidence="3">
    <location>
        <begin position="603"/>
        <end position="614"/>
    </location>
</feature>
<feature type="disulfide bond" evidence="3">
    <location>
        <begin position="616"/>
        <end position="625"/>
    </location>
</feature>
<feature type="disulfide bond" evidence="3">
    <location>
        <begin position="632"/>
        <end position="643"/>
    </location>
</feature>
<feature type="disulfide bond" evidence="3">
    <location>
        <begin position="637"/>
        <end position="648"/>
    </location>
</feature>
<feature type="disulfide bond" evidence="3">
    <location>
        <begin position="650"/>
        <end position="659"/>
    </location>
</feature>
<feature type="disulfide bond" evidence="3">
    <location>
        <begin position="664"/>
        <end position="675"/>
    </location>
</feature>
<feature type="disulfide bond" evidence="3">
    <location>
        <begin position="669"/>
        <end position="680"/>
    </location>
</feature>
<feature type="disulfide bond" evidence="3">
    <location>
        <begin position="682"/>
        <end position="691"/>
    </location>
</feature>
<feature type="disulfide bond" evidence="3">
    <location>
        <begin position="702"/>
        <end position="715"/>
    </location>
</feature>
<feature type="disulfide bond" evidence="3">
    <location>
        <begin position="717"/>
        <end position="726"/>
    </location>
</feature>
<feature type="disulfide bond" evidence="3">
    <location>
        <begin position="731"/>
        <end position="741"/>
    </location>
</feature>
<feature type="disulfide bond" evidence="3">
    <location>
        <begin position="735"/>
        <end position="746"/>
    </location>
</feature>
<feature type="disulfide bond" evidence="3">
    <location>
        <begin position="748"/>
        <end position="757"/>
    </location>
</feature>
<feature type="disulfide bond" evidence="3">
    <location>
        <begin position="762"/>
        <end position="772"/>
    </location>
</feature>
<feature type="disulfide bond" evidence="3">
    <location>
        <begin position="766"/>
        <end position="777"/>
    </location>
</feature>
<feature type="disulfide bond" evidence="3">
    <location>
        <begin position="779"/>
        <end position="788"/>
    </location>
</feature>
<feature type="disulfide bond" evidence="3">
    <location>
        <begin position="802"/>
        <end position="812"/>
    </location>
</feature>
<feature type="disulfide bond" evidence="3">
    <location>
        <begin position="806"/>
        <end position="821"/>
    </location>
</feature>
<feature type="disulfide bond" evidence="3">
    <location>
        <begin position="823"/>
        <end position="832"/>
    </location>
</feature>
<feature type="splice variant" id="VSP_021404" description="In isoform 3 and isoform 4." evidence="10">
    <original>M</original>
    <variation>MEPDHSALSAARAQFVDVEEREPEAM</variation>
    <location>
        <position position="1"/>
    </location>
</feature>
<feature type="splice variant" id="VSP_021405" description="In isoform 2 and isoform 3." evidence="10 11">
    <original>T</original>
    <variation>TGAPLHCSSASSTPIEQSPSPPPSPPANESQRRLLGNGVAQPTPDSDSEEEFVPNSFLVKSGSASLGVAAN</variation>
    <location>
        <position position="164"/>
    </location>
</feature>
<feature type="splice variant" id="VSP_021406" description="In isoform 3." evidence="10">
    <location>
        <begin position="251"/>
        <end position="283"/>
    </location>
</feature>
<feature type="splice variant" id="VSP_021407" description="In isoform 2." evidence="11">
    <location>
        <begin position="791"/>
        <end position="799"/>
    </location>
</feature>
<feature type="splice variant" id="VSP_021408" description="In isoform 2." evidence="11">
    <location>
        <begin position="1269"/>
        <end position="1275"/>
    </location>
</feature>
<feature type="sequence conflict" description="In Ref. 3; BAE36695." evidence="12" ref="3">
    <original>TR</original>
    <variation>EK</variation>
    <location>
        <begin position="136"/>
        <end position="137"/>
    </location>
</feature>
<feature type="sequence conflict" description="In Ref. 3; BAE36695." evidence="12" ref="3">
    <original>LTLTDTEHENTET</original>
    <variation>EKSGSASLGVAAN</variation>
    <location>
        <begin position="152"/>
        <end position="164"/>
    </location>
</feature>
<feature type="sequence conflict" description="In Ref. 1; AAC31807." evidence="12" ref="1">
    <original>L</original>
    <variation>V</variation>
    <location>
        <position position="240"/>
    </location>
</feature>
<feature type="sequence conflict" description="In Ref. 1; AAC31807." evidence="12" ref="1">
    <original>N</original>
    <variation>K</variation>
    <location>
        <position position="244"/>
    </location>
</feature>
<feature type="sequence conflict" description="In Ref. 1; AAC31807." evidence="12" ref="1">
    <original>L</original>
    <variation>V</variation>
    <location>
        <position position="247"/>
    </location>
</feature>
<feature type="sequence conflict" description="In Ref. 1; AAC31807." evidence="12" ref="1">
    <original>L</original>
    <variation>W</variation>
    <location>
        <position position="261"/>
    </location>
</feature>
<feature type="sequence conflict" description="In Ref. 1; AAC31807." evidence="12" ref="1">
    <original>L</original>
    <variation>F</variation>
    <location>
        <position position="271"/>
    </location>
</feature>
<feature type="sequence conflict" description="In Ref. 1; AAC31807." evidence="12" ref="1">
    <original>H</original>
    <variation>R</variation>
    <location>
        <position position="276"/>
    </location>
</feature>
<feature type="sequence conflict" description="In Ref. 1; AAC31807." evidence="12" ref="1">
    <original>L</original>
    <variation>F</variation>
    <location>
        <position position="286"/>
    </location>
</feature>
<feature type="sequence conflict" description="In Ref. 3; BAE36695." evidence="12" ref="3">
    <original>KPSSLFPE</original>
    <variation>RVAALSVL</variation>
    <location>
        <begin position="422"/>
        <end position="429"/>
    </location>
</feature>
<feature type="sequence conflict" description="In Ref. 1; AAC31807." evidence="12" ref="1">
    <original>F</original>
    <variation>L</variation>
    <location>
        <position position="493"/>
    </location>
</feature>
<feature type="sequence conflict" description="In Ref. 1; AAC31807." evidence="12" ref="1">
    <original>S</original>
    <variation>T</variation>
    <location>
        <position position="780"/>
    </location>
</feature>
<feature type="sequence conflict" description="In Ref. 2; BAA77399." evidence="12" ref="2">
    <original>S</original>
    <variation>P</variation>
    <location>
        <position position="895"/>
    </location>
</feature>
<feature type="sequence conflict" description="In Ref. 1; AAC31807." evidence="12" ref="1">
    <original>C</original>
    <variation>R</variation>
    <location>
        <position position="1013"/>
    </location>
</feature>
<feature type="sequence conflict" description="In Ref. 3; BAE28005." evidence="12" ref="3">
    <original>E</original>
    <variation>G</variation>
    <location>
        <position position="1039"/>
    </location>
</feature>
<feature type="sequence conflict" description="In Ref. 1; AAC31807." evidence="12" ref="1">
    <original>L</original>
    <variation>V</variation>
    <location>
        <position position="1077"/>
    </location>
</feature>
<feature type="sequence conflict" description="In Ref. 2; BAA77399." evidence="12" ref="2">
    <original>L</original>
    <variation>F</variation>
    <location>
        <position position="1133"/>
    </location>
</feature>
<feature type="sequence conflict" description="In Ref. 1; AAC31807." evidence="12" ref="1">
    <original>H</original>
    <variation>Q</variation>
    <location>
        <position position="1457"/>
    </location>
</feature>
<feature type="sequence conflict" description="In Ref. 1; AAC31807." evidence="12" ref="1">
    <original>N</original>
    <variation>H</variation>
    <location>
        <position position="1743"/>
    </location>
</feature>
<feature type="sequence conflict" description="In Ref. 1; AAC31807." evidence="12" ref="1">
    <original>A</original>
    <variation>G</variation>
    <location>
        <position position="1746"/>
    </location>
</feature>
<feature type="sequence conflict" description="In Ref. 1; AAC31807." evidence="12" ref="1">
    <original>R</original>
    <variation>P</variation>
    <location>
        <position position="1831"/>
    </location>
</feature>
<feature type="sequence conflict" description="In Ref. 1; AAC31807." evidence="12" ref="1">
    <original>L</original>
    <variation>F</variation>
    <location>
        <position position="1875"/>
    </location>
</feature>
<feature type="sequence conflict" description="In Ref. 3; BAE28005." evidence="12" ref="3">
    <original>N</original>
    <variation>D</variation>
    <location>
        <position position="1952"/>
    </location>
</feature>
<feature type="sequence conflict" description="In Ref. 1; AAC31807." evidence="12" ref="1">
    <original>T</original>
    <variation>S</variation>
    <location>
        <position position="2144"/>
    </location>
</feature>
<feature type="sequence conflict" description="In Ref. 1; AAC31807." evidence="12" ref="1">
    <original>I</original>
    <variation>T</variation>
    <location>
        <position position="2160"/>
    </location>
</feature>
<feature type="sequence conflict" description="In Ref. 3; BAE28005." evidence="12" ref="3">
    <original>K</original>
    <variation>R</variation>
    <location>
        <position position="2256"/>
    </location>
</feature>
<feature type="sequence conflict" description="In Ref. 1; AAC31807." evidence="12" ref="1">
    <original>F</original>
    <variation>S</variation>
    <location>
        <position position="2262"/>
    </location>
</feature>
<feature type="sequence conflict" description="In Ref. 1; AAC31807." evidence="12" ref="1">
    <original>N</original>
    <variation>S</variation>
    <location>
        <position position="2330"/>
    </location>
</feature>
<feature type="sequence conflict" description="In Ref. 1; AAC31807, 2; BAA77399 and 4; BAC65772." evidence="12" ref="1 2 4">
    <original>V</original>
    <variation>M</variation>
    <location>
        <position position="2657"/>
    </location>
</feature>
<accession>Q3UHK6</accession>
<accession>O70465</accession>
<accession>Q3TSI0</accession>
<accession>Q3UH52</accession>
<accession>Q80TF5</accession>
<accession>Q9WTS7</accession>
<name>TEN4_MOUSE</name>
<comment type="function">
    <text evidence="7 9">Involved in neural development, regulating the establishment of proper connectivity within the nervous system. Plays a role in the establishment of the anterior-posterior axis during gastrulation. Regulates the differentiation and cellular process formation of oligodendrocytes and myelination of small-diameter axons in the central nervous system (CNS). Promotes activation of focal adhesion kinase. May function as a cellular signal transducer.</text>
</comment>
<comment type="subunit">
    <text>Homodimer; disulfide-linked. May also form heterodimer with either TENM1 or TENM2 or TENM3.</text>
</comment>
<comment type="interaction">
    <interactant intactId="EBI-773013">
        <id>Q3UHK6</id>
    </interactant>
    <interactant intactId="EBI-774415">
        <id>Q8R555</id>
        <label>Crtac1</label>
    </interactant>
    <organismsDiffer>false</organismsDiffer>
    <experiments>2</experiments>
</comment>
<comment type="subcellular location">
    <subcellularLocation>
        <location evidence="1">Cell membrane</location>
        <topology evidence="2">Single-pass membrane protein</topology>
    </subcellularLocation>
    <subcellularLocation>
        <location evidence="9">Cell projection</location>
    </subcellularLocation>
    <subcellularLocation>
        <location evidence="9">Nucleus</location>
    </subcellularLocation>
    <subcellularLocation>
        <location evidence="9">Cytoplasm</location>
    </subcellularLocation>
</comment>
<comment type="alternative products">
    <event type="alternative splicing"/>
    <isoform>
        <id>Q3UHK6-1</id>
        <name>1</name>
        <sequence type="displayed"/>
    </isoform>
    <isoform>
        <id>Q3UHK6-2</id>
        <name>2</name>
        <sequence type="described" ref="VSP_021405 VSP_021407 VSP_021408"/>
    </isoform>
    <isoform>
        <id>Q3UHK6-3</id>
        <name>3</name>
        <sequence type="described" ref="VSP_021404 VSP_021405 VSP_021406"/>
    </isoform>
    <isoform>
        <id>Q3UHK6-4</id>
        <name>4</name>
        <sequence type="described" ref="VSP_021404"/>
    </isoform>
    <text>Additional mRNAs also exist. Tissue-specific expression of isoforms was observed throughout embryogenesis and in the brain and ovary adult tissues.</text>
</comment>
<comment type="tissue specificity">
    <text evidence="6 7 9">Expressed in brain and spinal cord (at protein level). Expressed in neurons and oligodendrocytes of the spinal cord. Expressed weakly in kidney, lung and spleen. Expressed in the cortex, CA1, CA2 and CA3 of the hippocampus. Expressed in the white matter, Purkinje cells and molecular layer of the cerebellum.</text>
</comment>
<comment type="developmental stage">
    <text evidence="6 7 9">Expressed in spinal cord at 18 dpc (at protein level). Expressed in the epiblast and extraembryonic regions as early as 6.5 dpc. Expressed in the neural plate and extraembryonic tissues at 7.5 dpc. Expressed in the forebrain, mid/hindbrain junction, somites and tail bud at 8.5 dpc. Expressed in the tail bud and limbs at 11.5 dpc. Expressed in the diencephalon and midbrain at 12.5 dpc.</text>
</comment>
<comment type="induction">
    <text evidence="9">Up-regulated during oligodendrocyte differentiation.</text>
</comment>
<comment type="domain">
    <text>EGF-like domains 2 and 5 which have an odd number of cysteines might enable the formation of intermolecular disulfide bonds.</text>
</comment>
<comment type="domain">
    <text>Cytoplasmic proline-rich regions could serve as docking domains for intracellular SH3-containing proteins.</text>
</comment>
<comment type="disruption phenotype">
    <text evidence="9">Mice show tremors and hypomyelination in the central nervous system (CNS), particularly in the spinal cord, but not in the sciatic nerve of the peripheral nervous system (PNS). Differentiation of oligodendrocytes is prevented in the spinal cord.</text>
</comment>
<comment type="similarity">
    <text evidence="12">Belongs to the tenascin family. Teneurin subfamily.</text>
</comment>
<dbReference type="EMBL" id="AF059485">
    <property type="protein sequence ID" value="AAC31807.1"/>
    <property type="molecule type" value="mRNA"/>
</dbReference>
<dbReference type="EMBL" id="AB025413">
    <property type="protein sequence ID" value="BAA77399.1"/>
    <property type="molecule type" value="mRNA"/>
</dbReference>
<dbReference type="EMBL" id="AK147579">
    <property type="protein sequence ID" value="BAE28005.1"/>
    <property type="molecule type" value="mRNA"/>
</dbReference>
<dbReference type="EMBL" id="AK147329">
    <property type="protein sequence ID" value="BAE27851.1"/>
    <property type="molecule type" value="mRNA"/>
</dbReference>
<dbReference type="EMBL" id="AK162046">
    <property type="protein sequence ID" value="BAE36695.1"/>
    <property type="molecule type" value="mRNA"/>
</dbReference>
<dbReference type="EMBL" id="AK122490">
    <property type="protein sequence ID" value="BAC65772.1"/>
    <property type="molecule type" value="mRNA"/>
</dbReference>
<dbReference type="CCDS" id="CCDS40024.1">
    <molecule id="Q3UHK6-4"/>
</dbReference>
<dbReference type="CCDS" id="CCDS80753.1">
    <molecule id="Q3UHK6-3"/>
</dbReference>
<dbReference type="CCDS" id="CCDS80754.1">
    <molecule id="Q3UHK6-2"/>
</dbReference>
<dbReference type="PIR" id="T14271">
    <property type="entry name" value="T14271"/>
</dbReference>
<dbReference type="RefSeq" id="NP_001297689.1">
    <molecule id="Q3UHK6-3"/>
    <property type="nucleotide sequence ID" value="NM_001310760.1"/>
</dbReference>
<dbReference type="RefSeq" id="NP_001297691.1">
    <molecule id="Q3UHK6-2"/>
    <property type="nucleotide sequence ID" value="NM_001310762.1"/>
</dbReference>
<dbReference type="RefSeq" id="NP_035988.2">
    <molecule id="Q3UHK6-4"/>
    <property type="nucleotide sequence ID" value="NM_011858.4"/>
</dbReference>
<dbReference type="RefSeq" id="XP_017177717.1">
    <property type="nucleotide sequence ID" value="XM_017322228.1"/>
</dbReference>
<dbReference type="RefSeq" id="XP_030098406.1">
    <molecule id="Q3UHK6-3"/>
    <property type="nucleotide sequence ID" value="XM_030242546.1"/>
</dbReference>
<dbReference type="RefSeq" id="XP_030098408.1">
    <molecule id="Q3UHK6-4"/>
    <property type="nucleotide sequence ID" value="XM_030242548.1"/>
</dbReference>
<dbReference type="RefSeq" id="XP_030098409.1">
    <molecule id="Q3UHK6-4"/>
    <property type="nucleotide sequence ID" value="XM_030242549.2"/>
</dbReference>
<dbReference type="RefSeq" id="XP_030098410.1">
    <molecule id="Q3UHK6-1"/>
    <property type="nucleotide sequence ID" value="XM_030242550.1"/>
</dbReference>
<dbReference type="RefSeq" id="XP_030098411.1">
    <molecule id="Q3UHK6-1"/>
    <property type="nucleotide sequence ID" value="XM_030242551.1"/>
</dbReference>
<dbReference type="RefSeq" id="XP_036008957.1">
    <molecule id="Q3UHK6-4"/>
    <property type="nucleotide sequence ID" value="XM_036153064.1"/>
</dbReference>
<dbReference type="RefSeq" id="XP_036008958.1">
    <molecule id="Q3UHK6-1"/>
    <property type="nucleotide sequence ID" value="XM_036153065.1"/>
</dbReference>
<dbReference type="RefSeq" id="XP_036008959.1">
    <molecule id="Q3UHK6-1"/>
    <property type="nucleotide sequence ID" value="XM_036153066.1"/>
</dbReference>
<dbReference type="SMR" id="Q3UHK6"/>
<dbReference type="BioGRID" id="204827">
    <property type="interactions" value="13"/>
</dbReference>
<dbReference type="FunCoup" id="Q3UHK6">
    <property type="interactions" value="1718"/>
</dbReference>
<dbReference type="IntAct" id="Q3UHK6">
    <property type="interactions" value="6"/>
</dbReference>
<dbReference type="MINT" id="Q3UHK6"/>
<dbReference type="STRING" id="10090.ENSMUSP00000102783"/>
<dbReference type="GlyConnect" id="2432">
    <molecule id="Q3UHK6-2"/>
    <property type="glycosylation" value="3 N-Linked glycans (4 sites)"/>
</dbReference>
<dbReference type="GlyCosmos" id="Q3UHK6">
    <property type="glycosylation" value="12 sites, No reported glycans"/>
</dbReference>
<dbReference type="GlyGen" id="Q3UHK6">
    <property type="glycosylation" value="16 sites, 9 N-linked glycans (9 sites), 1 O-linked glycan (2 sites)"/>
</dbReference>
<dbReference type="iPTMnet" id="Q3UHK6"/>
<dbReference type="PhosphoSitePlus" id="Q3UHK6"/>
<dbReference type="SwissPalm" id="Q3UHK6"/>
<dbReference type="jPOST" id="Q3UHK6"/>
<dbReference type="PaxDb" id="10090-ENSMUSP00000102783"/>
<dbReference type="PeptideAtlas" id="Q3UHK6"/>
<dbReference type="ProteomicsDB" id="258993">
    <molecule id="Q3UHK6-1"/>
</dbReference>
<dbReference type="ProteomicsDB" id="258994">
    <molecule id="Q3UHK6-2"/>
</dbReference>
<dbReference type="ProteomicsDB" id="258995">
    <molecule id="Q3UHK6-3"/>
</dbReference>
<dbReference type="ProteomicsDB" id="258996">
    <molecule id="Q3UHK6-4"/>
</dbReference>
<dbReference type="Antibodypedia" id="67208">
    <property type="antibodies" value="30 antibodies from 9 providers"/>
</dbReference>
<dbReference type="DNASU" id="23966"/>
<dbReference type="Ensembl" id="ENSMUST00000107162.8">
    <molecule id="Q3UHK6-2"/>
    <property type="protein sequence ID" value="ENSMUSP00000102780.2"/>
    <property type="gene ID" value="ENSMUSG00000048078.17"/>
</dbReference>
<dbReference type="Ensembl" id="ENSMUST00000107165.8">
    <molecule id="Q3UHK6-3"/>
    <property type="protein sequence ID" value="ENSMUSP00000102783.2"/>
    <property type="gene ID" value="ENSMUSG00000048078.17"/>
</dbReference>
<dbReference type="Ensembl" id="ENSMUST00000107166.8">
    <molecule id="Q3UHK6-4"/>
    <property type="protein sequence ID" value="ENSMUSP00000102784.2"/>
    <property type="gene ID" value="ENSMUSG00000048078.17"/>
</dbReference>
<dbReference type="GeneID" id="23966"/>
<dbReference type="KEGG" id="mmu:23966"/>
<dbReference type="UCSC" id="uc009iio.1">
    <molecule id="Q3UHK6-4"/>
    <property type="organism name" value="mouse"/>
</dbReference>
<dbReference type="UCSC" id="uc009iip.1">
    <molecule id="Q3UHK6-3"/>
    <property type="organism name" value="mouse"/>
</dbReference>
<dbReference type="UCSC" id="uc009iiq.1">
    <molecule id="Q3UHK6-2"/>
    <property type="organism name" value="mouse"/>
</dbReference>
<dbReference type="AGR" id="MGI:2447063"/>
<dbReference type="CTD" id="26011"/>
<dbReference type="MGI" id="MGI:2447063">
    <property type="gene designation" value="Tenm4"/>
</dbReference>
<dbReference type="VEuPathDB" id="HostDB:ENSMUSG00000048078"/>
<dbReference type="eggNOG" id="KOG4659">
    <property type="taxonomic scope" value="Eukaryota"/>
</dbReference>
<dbReference type="GeneTree" id="ENSGT01030000234566"/>
<dbReference type="HOGENOM" id="CLU_000229_0_0_1"/>
<dbReference type="InParanoid" id="Q3UHK6"/>
<dbReference type="OMA" id="TSHETGF"/>
<dbReference type="PhylomeDB" id="Q3UHK6"/>
<dbReference type="TreeFam" id="TF316833"/>
<dbReference type="BioGRID-ORCS" id="23966">
    <property type="hits" value="0 hits in 59 CRISPR screens"/>
</dbReference>
<dbReference type="ChiTaRS" id="Tenm4">
    <property type="organism name" value="mouse"/>
</dbReference>
<dbReference type="PRO" id="PR:Q3UHK6"/>
<dbReference type="Proteomes" id="UP000000589">
    <property type="component" value="Chromosome 7"/>
</dbReference>
<dbReference type="RNAct" id="Q3UHK6">
    <property type="molecule type" value="protein"/>
</dbReference>
<dbReference type="Bgee" id="ENSMUSG00000048078">
    <property type="expression patterns" value="Expressed in floor plate of midbrain and 223 other cell types or tissues"/>
</dbReference>
<dbReference type="ExpressionAtlas" id="Q3UHK6">
    <property type="expression patterns" value="baseline and differential"/>
</dbReference>
<dbReference type="GO" id="GO:0005737">
    <property type="term" value="C:cytoplasm"/>
    <property type="evidence" value="ECO:0000314"/>
    <property type="project" value="UniProtKB"/>
</dbReference>
<dbReference type="GO" id="GO:0098978">
    <property type="term" value="C:glutamatergic synapse"/>
    <property type="evidence" value="ECO:0000314"/>
    <property type="project" value="SynGO"/>
</dbReference>
<dbReference type="GO" id="GO:0043005">
    <property type="term" value="C:neuron projection"/>
    <property type="evidence" value="ECO:0000314"/>
    <property type="project" value="UniProtKB"/>
</dbReference>
<dbReference type="GO" id="GO:0005634">
    <property type="term" value="C:nucleus"/>
    <property type="evidence" value="ECO:0000314"/>
    <property type="project" value="UniProtKB"/>
</dbReference>
<dbReference type="GO" id="GO:0005886">
    <property type="term" value="C:plasma membrane"/>
    <property type="evidence" value="ECO:0000314"/>
    <property type="project" value="MGI"/>
</dbReference>
<dbReference type="GO" id="GO:0042802">
    <property type="term" value="F:identical protein binding"/>
    <property type="evidence" value="ECO:0000353"/>
    <property type="project" value="MGI"/>
</dbReference>
<dbReference type="GO" id="GO:0042803">
    <property type="term" value="F:protein homodimerization activity"/>
    <property type="evidence" value="ECO:0000314"/>
    <property type="project" value="UniProtKB"/>
</dbReference>
<dbReference type="GO" id="GO:0060912">
    <property type="term" value="P:cardiac cell fate specification"/>
    <property type="evidence" value="ECO:0000315"/>
    <property type="project" value="MGI"/>
</dbReference>
<dbReference type="GO" id="GO:0060038">
    <property type="term" value="P:cardiac muscle cell proliferation"/>
    <property type="evidence" value="ECO:0000315"/>
    <property type="project" value="MGI"/>
</dbReference>
<dbReference type="GO" id="GO:0032289">
    <property type="term" value="P:central nervous system myelin formation"/>
    <property type="evidence" value="ECO:0000315"/>
    <property type="project" value="UniProtKB"/>
</dbReference>
<dbReference type="GO" id="GO:0001702">
    <property type="term" value="P:gastrulation with mouth forming second"/>
    <property type="evidence" value="ECO:0000315"/>
    <property type="project" value="MGI"/>
</dbReference>
<dbReference type="GO" id="GO:0048666">
    <property type="term" value="P:neuron development"/>
    <property type="evidence" value="ECO:0000250"/>
    <property type="project" value="UniProtKB"/>
</dbReference>
<dbReference type="GO" id="GO:2000543">
    <property type="term" value="P:positive regulation of gastrulation"/>
    <property type="evidence" value="ECO:0000315"/>
    <property type="project" value="UniProtKB"/>
</dbReference>
<dbReference type="GO" id="GO:0031643">
    <property type="term" value="P:positive regulation of myelination"/>
    <property type="evidence" value="ECO:0000315"/>
    <property type="project" value="UniProtKB"/>
</dbReference>
<dbReference type="GO" id="GO:0048714">
    <property type="term" value="P:positive regulation of oligodendrocyte differentiation"/>
    <property type="evidence" value="ECO:0000315"/>
    <property type="project" value="UniProtKB"/>
</dbReference>
<dbReference type="GO" id="GO:0031641">
    <property type="term" value="P:regulation of myelination"/>
    <property type="evidence" value="ECO:0000250"/>
    <property type="project" value="UniProtKB"/>
</dbReference>
<dbReference type="GO" id="GO:0007165">
    <property type="term" value="P:signal transduction"/>
    <property type="evidence" value="ECO:0007669"/>
    <property type="project" value="InterPro"/>
</dbReference>
<dbReference type="GO" id="GO:0099560">
    <property type="term" value="P:synaptic membrane adhesion"/>
    <property type="evidence" value="ECO:0000314"/>
    <property type="project" value="SynGO"/>
</dbReference>
<dbReference type="CDD" id="cd00054">
    <property type="entry name" value="EGF_CA"/>
    <property type="match status" value="2"/>
</dbReference>
<dbReference type="FunFam" id="2.10.25.10:FF:000016">
    <property type="entry name" value="Teneurin transmembrane protein 2"/>
    <property type="match status" value="1"/>
</dbReference>
<dbReference type="FunFam" id="2.10.25.10:FF:000021">
    <property type="entry name" value="Teneurin transmembrane protein 2"/>
    <property type="match status" value="2"/>
</dbReference>
<dbReference type="FunFam" id="2.10.25.10:FF:000026">
    <property type="entry name" value="Teneurin transmembrane protein 2"/>
    <property type="match status" value="1"/>
</dbReference>
<dbReference type="FunFam" id="2.10.25.10:FF:000013">
    <property type="entry name" value="Teneurin transmembrane protein 4"/>
    <property type="match status" value="1"/>
</dbReference>
<dbReference type="FunFam" id="2.10.25.10:FF:000132">
    <property type="entry name" value="Teneurin transmembrane protein 4"/>
    <property type="match status" value="1"/>
</dbReference>
<dbReference type="FunFam" id="2.120.10.30:FF:000005">
    <property type="entry name" value="Teneurin transmembrane protein 4"/>
    <property type="match status" value="1"/>
</dbReference>
<dbReference type="FunFam" id="2.120.10.30:FF:000006">
    <property type="entry name" value="Teneurin transmembrane protein 4"/>
    <property type="match status" value="1"/>
</dbReference>
<dbReference type="FunFam" id="2.180.10.10:FF:000001">
    <property type="entry name" value="Teneurin transmembrane protein 4"/>
    <property type="match status" value="1"/>
</dbReference>
<dbReference type="FunFam" id="2.180.10.10:FF:000005">
    <property type="entry name" value="Teneurin transmembrane protein 4"/>
    <property type="match status" value="1"/>
</dbReference>
<dbReference type="Gene3D" id="2.10.25.10">
    <property type="entry name" value="Laminin"/>
    <property type="match status" value="6"/>
</dbReference>
<dbReference type="Gene3D" id="2.180.10.10">
    <property type="entry name" value="RHS repeat-associated core"/>
    <property type="match status" value="2"/>
</dbReference>
<dbReference type="Gene3D" id="2.120.10.30">
    <property type="entry name" value="TolB, C-terminal domain"/>
    <property type="match status" value="2"/>
</dbReference>
<dbReference type="InterPro" id="IPR011042">
    <property type="entry name" value="6-blade_b-propeller_TolB-like"/>
</dbReference>
<dbReference type="InterPro" id="IPR008969">
    <property type="entry name" value="CarboxyPept-like_regulatory"/>
</dbReference>
<dbReference type="InterPro" id="IPR000742">
    <property type="entry name" value="EGF-like_dom"/>
</dbReference>
<dbReference type="InterPro" id="IPR022385">
    <property type="entry name" value="Rhs_assc_core"/>
</dbReference>
<dbReference type="InterPro" id="IPR009471">
    <property type="entry name" value="Ten_N"/>
</dbReference>
<dbReference type="InterPro" id="IPR056822">
    <property type="entry name" value="TEN_NHL"/>
</dbReference>
<dbReference type="InterPro" id="IPR056820">
    <property type="entry name" value="TEN_TTR-like"/>
</dbReference>
<dbReference type="InterPro" id="IPR056823">
    <property type="entry name" value="TEN_YD-shell"/>
</dbReference>
<dbReference type="InterPro" id="IPR051216">
    <property type="entry name" value="Teneurin"/>
</dbReference>
<dbReference type="InterPro" id="IPR028916">
    <property type="entry name" value="Tox-GHH_dom"/>
</dbReference>
<dbReference type="InterPro" id="IPR006530">
    <property type="entry name" value="YD"/>
</dbReference>
<dbReference type="NCBIfam" id="TIGR03696">
    <property type="entry name" value="Rhs_assc_core"/>
    <property type="match status" value="1"/>
</dbReference>
<dbReference type="NCBIfam" id="TIGR01643">
    <property type="entry name" value="YD_repeat_2x"/>
    <property type="match status" value="1"/>
</dbReference>
<dbReference type="PANTHER" id="PTHR11219">
    <property type="entry name" value="TENEURIN AND N-ACETYLGLUCOSAMINE-1-PHOSPHODIESTER ALPHA-N-ACETYLGLUCOSAMINIDASE"/>
    <property type="match status" value="1"/>
</dbReference>
<dbReference type="PANTHER" id="PTHR11219:SF9">
    <property type="entry name" value="TENEURIN-4"/>
    <property type="match status" value="1"/>
</dbReference>
<dbReference type="Pfam" id="PF25024">
    <property type="entry name" value="EGF_TEN"/>
    <property type="match status" value="1"/>
</dbReference>
<dbReference type="Pfam" id="PF24329">
    <property type="entry name" value="FN-plug_TEN1-4"/>
    <property type="match status" value="1"/>
</dbReference>
<dbReference type="Pfam" id="PF23093">
    <property type="entry name" value="GBD_Tenm3"/>
    <property type="match status" value="1"/>
</dbReference>
<dbReference type="Pfam" id="PF06484">
    <property type="entry name" value="Ten_N"/>
    <property type="match status" value="2"/>
</dbReference>
<dbReference type="Pfam" id="PF25021">
    <property type="entry name" value="TEN_NHL"/>
    <property type="match status" value="1"/>
</dbReference>
<dbReference type="Pfam" id="PF25023">
    <property type="entry name" value="TEN_YD-shell"/>
    <property type="match status" value="1"/>
</dbReference>
<dbReference type="Pfam" id="PF23538">
    <property type="entry name" value="Teneurin_ABD"/>
    <property type="match status" value="1"/>
</dbReference>
<dbReference type="Pfam" id="PF15636">
    <property type="entry name" value="Tox-GHH"/>
    <property type="match status" value="1"/>
</dbReference>
<dbReference type="Pfam" id="PF25020">
    <property type="entry name" value="TTR_TEN1-4"/>
    <property type="match status" value="1"/>
</dbReference>
<dbReference type="SMART" id="SM00181">
    <property type="entry name" value="EGF"/>
    <property type="match status" value="8"/>
</dbReference>
<dbReference type="SUPFAM" id="SSF49464">
    <property type="entry name" value="Carboxypeptidase regulatory domain-like"/>
    <property type="match status" value="1"/>
</dbReference>
<dbReference type="SUPFAM" id="SSF57196">
    <property type="entry name" value="EGF/Laminin"/>
    <property type="match status" value="1"/>
</dbReference>
<dbReference type="SUPFAM" id="SSF101898">
    <property type="entry name" value="NHL repeat"/>
    <property type="match status" value="1"/>
</dbReference>
<dbReference type="SUPFAM" id="SSF69322">
    <property type="entry name" value="Tricorn protease domain 2"/>
    <property type="match status" value="1"/>
</dbReference>
<dbReference type="PROSITE" id="PS00022">
    <property type="entry name" value="EGF_1"/>
    <property type="match status" value="8"/>
</dbReference>
<dbReference type="PROSITE" id="PS01186">
    <property type="entry name" value="EGF_2"/>
    <property type="match status" value="7"/>
</dbReference>
<dbReference type="PROSITE" id="PS50026">
    <property type="entry name" value="EGF_3"/>
    <property type="match status" value="5"/>
</dbReference>
<dbReference type="PROSITE" id="PS51361">
    <property type="entry name" value="TENEURIN_N"/>
    <property type="match status" value="1"/>
</dbReference>
<organism>
    <name type="scientific">Mus musculus</name>
    <name type="common">Mouse</name>
    <dbReference type="NCBI Taxonomy" id="10090"/>
    <lineage>
        <taxon>Eukaryota</taxon>
        <taxon>Metazoa</taxon>
        <taxon>Chordata</taxon>
        <taxon>Craniata</taxon>
        <taxon>Vertebrata</taxon>
        <taxon>Euteleostomi</taxon>
        <taxon>Mammalia</taxon>
        <taxon>Eutheria</taxon>
        <taxon>Euarchontoglires</taxon>
        <taxon>Glires</taxon>
        <taxon>Rodentia</taxon>
        <taxon>Myomorpha</taxon>
        <taxon>Muroidea</taxon>
        <taxon>Muridae</taxon>
        <taxon>Murinae</taxon>
        <taxon>Mus</taxon>
        <taxon>Mus</taxon>
    </lineage>
</organism>
<sequence length="2771" mass="308425">MDVKERKPYRSLTRRRDAERRYTSSSADSEEGKGPQKSYSSSETLKAYDQDARLAYGSRVKDMVPQEAEEFCRTGTNFTLRELGLGEMTPPHGTLYRTDIGLPHCGYSMGASSDADLEADTVLSPEHPVRLWGRSTRSGRSSCLSSRANSNLTLTDTEHENTETDHPSSLQNHPRLRTPPPPLPHAHTPNQHHAASINSLNRGNFTPRSNPSPAPTDHSLSGEPPAGSAQEPTHAQDNWLLNSNIPLETRNLGKQPFLGTLQDNLIEMDILSASRHDGAYSDGHFLFKPGGTSPLFCTTSPGYPLTSSTVYSPPPRPLPRSTFSRPAFNLKKPSKYCNWKCAALSAILISATLVILLAYFVAMHLFGLNWHLQPMEGQMQMYEITEDTASSWPVPTDVSLYPSGGTGLETPDRKGKGAAEGKPSSLFPEDSFIDSGEIDVGRRASQKIPPGTFWRSQVFIDHPVHLKFNVSLGKAALVGIYGRKGLPPSHTQFDFVELLDGRRLLTQEARSLEGPQRQSRGPVPPSSHETGFIQYLDSGIWHLAFYNDGKESEVVSFLTTAIESVDNCPSNCYGNGDCISGTCHCFLGFLGPDCGRASCPVLCSGNGQYMKGRCLCHSGWKGAECDVPTNQCIDVACSSHGTCIMGTCICNPGYKGESCEEVDCMDPTCSSRGVCVRGECHCSVGWGGTNCETPRATCLDQCSGHGTFLPDTGLCNCDPSWTGHDCSIEICAADCGGHGVCVGGTCRCEDGWMGAACDQRACHPRCAEHGTCRDGKCECSPGWNGEHCTIAHYLDRVVKEGCPGLCNGNGRCTLDLNGWHCVCQLGWRGTGCDTSMETGCGDGKDNDGDGLVDCMDPDCCLQPLCHVNPLCLGSPDPLDIIQETQAPVSQQNLNSFYDRIKFLVGRDSTHSIPGENPFDGGHACVIRGQVMTSDGTPLVGVNISFINNPLFGYTISRQDGSFDLVTNGGISIILRFERAPFITQEHTLWLPWDRFFVMETIVMRHEENEIPSCDLSNFARPNPVVSPSPLTSFASSCAEKGPIVPEIQALQEEIVIAGCKMRLSYLSSRTPGYKSVLRISLTHPTIPFNLMKVHLMVAVEGRLFRKWFAAAPDLSYYFIWDKTDVYNQKVFGLSEAFVSVGYEYESCPDLILWEKRTAVLQGYEIDASKLGGWSLDKHHALNIQSGILHKGNGENQFVSQQPPVIGSIMGNGRRRSISCPSCNGLADGNKLLAPVALTCGSDGSLYVGDFNYIRRIFPSGNVTNILEMRNKDFRHSHSPAHKYYLATDPMSGAVFLSDTNSRRVFKVKSTTVVKDLVKNSEVVAGTGDQCLPFDDTRCGDGGKATEATLTNPRGITVDKFGLIYFVDGTMIRRVDQNGIISTLLGSNDLTSARPLSCDSVMEISQVRLEWPTDLAINPMDNSLYVLDNNVVLQISENHQVRIVAGRPMHCQVPGIDHFLLSKVAIHATLESATALAVSHNGVLYIAETDEKKINRIRQVTTSGEISLVAGAPSGCDCKNDANCDCFSGDDGYAKDAKLNTPSSLAVCADGELYVADLGNIRIRFIRKNKPFLNTQNMYELSSPIDQELYLFDTSGKHLYTQSLPTGDYLYNFTYTGDGDITHITDNNGNMVNVRRDSTGMPLWLVVPDGQVYWVTMGTNSALRSVTTQGHELAMMTYHGNSGLLATKSNENGWTTFYEYDSFGRLTNVTFPTGQVSSFRSDTDSSVHVQVETSSKDDVTITTNLSASGAFYTLLQDQVRNSYYIGADGSLRLLLANGMEVALQTEPHLLAGTVNPTVGKRNVTLPIDNGLNLVEWRQRKEQARGQVTVFGRRLRVHNRNLLSLDFDRVTRTEKIYDDHRKFTLRILYDQAGRPSLWSPSSRLNGVNVTYSPGGHIAGIQRGIMSERMEYDQAGRITSRIFADGKMWSYTYLEKSMVLHLHSQRQYIFEFDKNDRLSSVTMPNVARQTLETIRSVGYYRNIYQPPEGNASVIQDFTEDGHLLHTFYLGTGRRVIYKYGKLSKLAETLYDTTKVSFTYDETAGMLKTVNLQNEGFTCTIRYRQIGPLIDRQIFRFTEEGMVNARFDYNYDNSFRVTSMQAVINETPLPIDLYRYDDVSGKTEQFGKFGVIYYDINQIITTAVMTHTKHFDAYGRMKEVQYEIFRSLMYWMTVQYDNMGRVVKKELKVGPYANTTRYSYEYDADGQLQTVSINDKPLWRYSYDLNGNLHLLSPGNSARLTPLRYDLRDRITRLGDVQYKMDEDGFLRQRGGDVFEYNSAGLLIKAYNRASGWSVRYRYDGLGRRVSSKSSHSHHLQFFYADLTNPTKVTHLYNHSSSEITSLYYDLQGHLFAMELSSGDEFYIACDNIGTPLAVFSGTGLMIKQILYTAYGEIYMDTNPNFQIIIGYHGGLYDPLTKLVHMGRRDYDVLAGRWTSPDHELWKRLSSNSIVPFHLYMFKNNNPISNSQDIKCFMTDVNSWLLTFGFQLHNVIPGYPKPDTDAMEPSYELVHTQMKTQEWDNSKSILGVQCEVQKQLKAFVTLERFDQLYGSTITSCQQAPETKKFASSGSIFGKGVKFALKDGRVTTDIISVANEDGRRIAAILNNAHYLENLHFTIDGVDTHYFVKPGPSEGDLAILGLSGGRRTLENGVNVTVSQINTVLSGRTRRYTDIQLQYRALCLNTRYGTTVDEEKVRVLELARQRAVRQAWAREQQRLREGEEGLRAWTDGEKQQVLNTGRVQGYDGFFVTSVEQYPELSDSANNIHFMRQSEMGRR</sequence>
<evidence type="ECO:0000250" key="1">
    <source>
        <dbReference type="UniProtKB" id="Q6N022"/>
    </source>
</evidence>
<evidence type="ECO:0000255" key="2"/>
<evidence type="ECO:0000255" key="3">
    <source>
        <dbReference type="PROSITE-ProRule" id="PRU00076"/>
    </source>
</evidence>
<evidence type="ECO:0000255" key="4">
    <source>
        <dbReference type="PROSITE-ProRule" id="PRU00694"/>
    </source>
</evidence>
<evidence type="ECO:0000256" key="5">
    <source>
        <dbReference type="SAM" id="MobiDB-lite"/>
    </source>
</evidence>
<evidence type="ECO:0000269" key="6">
    <source>
    </source>
</evidence>
<evidence type="ECO:0000269" key="7">
    <source>
    </source>
</evidence>
<evidence type="ECO:0000269" key="8">
    <source>
    </source>
</evidence>
<evidence type="ECO:0000269" key="9">
    <source>
    </source>
</evidence>
<evidence type="ECO:0000303" key="10">
    <source>
    </source>
</evidence>
<evidence type="ECO:0000303" key="11">
    <source>
    </source>
</evidence>
<evidence type="ECO:0000305" key="12"/>
<evidence type="ECO:0007744" key="13">
    <source>
    </source>
</evidence>
<gene>
    <name type="primary">Tenm4</name>
    <name type="synonym">Doc4</name>
    <name type="synonym">Kiaa1302</name>
    <name type="synonym">Odz4</name>
    <name type="synonym">Tnm4</name>
</gene>